<accession>P69898</accession>
<accession>P03100</accession>
<keyword id="KW-0002">3D-structure</keyword>
<keyword id="KW-0167">Capsid protein</keyword>
<keyword id="KW-1015">Disulfide bond</keyword>
<keyword id="KW-1048">Host nucleus</keyword>
<keyword id="KW-0945">Host-virus interaction</keyword>
<keyword id="KW-0426">Late protein</keyword>
<keyword id="KW-1145">T=7 icosahedral capsid protein</keyword>
<keyword id="KW-1161">Viral attachment to host cell</keyword>
<keyword id="KW-1162">Viral penetration into host cytoplasm</keyword>
<keyword id="KW-0946">Virion</keyword>
<keyword id="KW-1164">Virus endocytosis by host</keyword>
<keyword id="KW-1160">Virus entry into host cell</keyword>
<organism>
    <name type="scientific">Human papillomavirus type 6a</name>
    <dbReference type="NCBI Taxonomy" id="37122"/>
    <lineage>
        <taxon>Viruses</taxon>
        <taxon>Monodnaviria</taxon>
        <taxon>Shotokuvirae</taxon>
        <taxon>Cossaviricota</taxon>
        <taxon>Papovaviricetes</taxon>
        <taxon>Zurhausenvirales</taxon>
        <taxon>Papillomaviridae</taxon>
        <taxon>Firstpapillomavirinae</taxon>
        <taxon>Alphapapillomavirus</taxon>
        <taxon>Alphapapillomavirus 10</taxon>
    </lineage>
</organism>
<protein>
    <recommendedName>
        <fullName evidence="1">Major capsid protein L1</fullName>
    </recommendedName>
</protein>
<dbReference type="EMBL" id="L41216">
    <property type="protein sequence ID" value="AAA74218.1"/>
    <property type="molecule type" value="Genomic_DNA"/>
</dbReference>
<dbReference type="PDB" id="6L31">
    <property type="method" value="EM"/>
    <property type="resolution" value="4.18 A"/>
    <property type="chains" value="A/B/C/D/E/F=22-468"/>
</dbReference>
<dbReference type="PDB" id="8YEF">
    <property type="method" value="EM"/>
    <property type="resolution" value="4.30 A"/>
    <property type="chains" value="C/H/I/J/K=19-467"/>
</dbReference>
<dbReference type="PDBsum" id="6L31"/>
<dbReference type="PDBsum" id="8YEF"/>
<dbReference type="EMDB" id="EMD-39193"/>
<dbReference type="SMR" id="P69898"/>
<dbReference type="Proteomes" id="UP000007675">
    <property type="component" value="Genome"/>
</dbReference>
<dbReference type="GO" id="GO:0042025">
    <property type="term" value="C:host cell nucleus"/>
    <property type="evidence" value="ECO:0007669"/>
    <property type="project" value="UniProtKB-SubCell"/>
</dbReference>
<dbReference type="GO" id="GO:0039620">
    <property type="term" value="C:T=7 icosahedral viral capsid"/>
    <property type="evidence" value="ECO:0007669"/>
    <property type="project" value="UniProtKB-UniRule"/>
</dbReference>
<dbReference type="GO" id="GO:0005198">
    <property type="term" value="F:structural molecule activity"/>
    <property type="evidence" value="ECO:0007669"/>
    <property type="project" value="UniProtKB-UniRule"/>
</dbReference>
<dbReference type="GO" id="GO:0075509">
    <property type="term" value="P:endocytosis involved in viral entry into host cell"/>
    <property type="evidence" value="ECO:0007669"/>
    <property type="project" value="UniProtKB-KW"/>
</dbReference>
<dbReference type="GO" id="GO:0019062">
    <property type="term" value="P:virion attachment to host cell"/>
    <property type="evidence" value="ECO:0007669"/>
    <property type="project" value="UniProtKB-UniRule"/>
</dbReference>
<dbReference type="Gene3D" id="2.60.175.20">
    <property type="entry name" value="Major capsid L1 (late) superfamily, Papillomavirus"/>
    <property type="match status" value="2"/>
</dbReference>
<dbReference type="HAMAP" id="MF_04002">
    <property type="entry name" value="PPV_L1"/>
    <property type="match status" value="1"/>
</dbReference>
<dbReference type="InterPro" id="IPR002210">
    <property type="entry name" value="Capsid_L1_Papillomavir"/>
</dbReference>
<dbReference type="InterPro" id="IPR036973">
    <property type="entry name" value="Capsid_L1_sf_Papillomavir"/>
</dbReference>
<dbReference type="InterPro" id="IPR011222">
    <property type="entry name" value="dsDNA_vir_gr_I_capsid"/>
</dbReference>
<dbReference type="Pfam" id="PF00500">
    <property type="entry name" value="Late_protein_L1"/>
    <property type="match status" value="1"/>
</dbReference>
<dbReference type="PRINTS" id="PR00865">
    <property type="entry name" value="HPVCAPSIDL1"/>
</dbReference>
<dbReference type="SUPFAM" id="SSF88648">
    <property type="entry name" value="Group I dsDNA viruses"/>
    <property type="match status" value="1"/>
</dbReference>
<proteinExistence type="evidence at protein level"/>
<comment type="function">
    <text evidence="1">Forms an icosahedral capsid with a T=7 symmetry and a 50 nm diameter. The capsid is composed of 72 pentamers linked to each other by disulfide bonds and associated with L2 proteins. Binds to heparan sulfate proteoglycans on cell surface of basal layer keratinocytes to provide initial virion attachment. This binding mediates a conformational change in the virus capsid that facilitates efficient infection. The virion enters the host cell via endocytosis. During virus trafficking, L1 protein dissociates from the viral DNA and the genomic DNA is released to the host nucleus. The virion assembly takes place within the cell nucleus. Encapsulates the genomic DNA together with protein L2.</text>
</comment>
<comment type="subunit">
    <text evidence="1">Self-assembles into homopentamers. The capsid has an icosahedral symmetry and consists of 72 capsomers, with each capsomer being a pentamer of L1. Interacts with the minor capsid protein L2; this interaction is necessary for viral genome encapsidation. Interacts with protein E2; this interaction enhances E2-dependent replication and transcription activation.</text>
</comment>
<comment type="subcellular location">
    <subcellularLocation>
        <location evidence="1">Virion</location>
    </subcellularLocation>
    <subcellularLocation>
        <location evidence="1">Host nucleus</location>
    </subcellularLocation>
</comment>
<comment type="similarity">
    <text evidence="1">Belongs to the papillomaviridae L1 protein family.</text>
</comment>
<gene>
    <name evidence="1" type="primary">L1</name>
</gene>
<name>VL1_HPV6A</name>
<sequence length="500" mass="55597">MWRPSDSTVYVPPPNPVSKVVATDAYVTRTNIFYHASSSRLLAVGHPYFSIKRANKTVVPKVSGYQYRVFKVVLPDPNKFALPDSSLFDPTTQRLVWACTGLEVGRGQPLGVGVSGHPFLNKYDDVENSGSGGNPGQDNRVNVGMDYKQTQLCMVGCAPPLGEHWGKGKQCTNTPVQAGDCPPLELITSVIQDGDMVDTGFGAMNFADLQTNKSDVPIDICGTTCKYPDYLQMAADPYGDRLFFFLRKEQMFARHFFNRAGEVGEPVPDTLIIKGSGNRTSVGSSIYVNTPSGSLVSSEAQLFNKPYWLQKAQGHNNGICWGNQLFVTVVDTTRSTNMTLCASVTTSSTYTNSDYKEYMRHVEEYDLQFIFQLCSITLSAEVMAYIHTMNPSVLEDWNFGLSPPPNGTLEDTYRYVQSQAITCQKPTPEKEKPDPYKNLSFWEVNLKEKFSSELDQYPLGRKFLLQSGYRGRSSIRTGVKRPAVSKASAAPKRKRAKTKR</sequence>
<organismHost>
    <name type="scientific">Homo sapiens</name>
    <name type="common">Human</name>
    <dbReference type="NCBI Taxonomy" id="9606"/>
</organismHost>
<evidence type="ECO:0000255" key="1">
    <source>
        <dbReference type="HAMAP-Rule" id="MF_04002"/>
    </source>
</evidence>
<evidence type="ECO:0000256" key="2">
    <source>
        <dbReference type="SAM" id="MobiDB-lite"/>
    </source>
</evidence>
<feature type="chain" id="PRO_0000133489" description="Major capsid protein L1">
    <location>
        <begin position="1"/>
        <end position="500"/>
    </location>
</feature>
<feature type="region of interest" description="Disordered" evidence="2">
    <location>
        <begin position="475"/>
        <end position="500"/>
    </location>
</feature>
<feature type="compositionally biased region" description="Low complexity" evidence="2">
    <location>
        <begin position="480"/>
        <end position="490"/>
    </location>
</feature>
<feature type="compositionally biased region" description="Basic residues" evidence="2">
    <location>
        <begin position="491"/>
        <end position="500"/>
    </location>
</feature>
<feature type="disulfide bond" description="Interchain (with C-423)" evidence="1">
    <location>
        <position position="171"/>
    </location>
</feature>
<feature type="disulfide bond" description="Interchain (with C-171)" evidence="1">
    <location>
        <position position="423"/>
    </location>
</feature>
<reference key="1">
    <citation type="journal article" date="1995" name="Virology">
        <title>Sequence determination of human papillomavirus type 6a and assembly of virus-like particles in Saccharomyces cerevisiae.</title>
        <authorList>
            <person name="Hofmann K.J."/>
            <person name="Cook J.C."/>
            <person name="Joyce J.G."/>
            <person name="Brown D.R."/>
            <person name="Schultz L.D."/>
            <person name="George H.A."/>
            <person name="Rosolowsky M."/>
            <person name="Fife K.H."/>
            <person name="Jansen K.U."/>
        </authorList>
    </citation>
    <scope>NUCLEOTIDE SEQUENCE [GENOMIC DNA]</scope>
</reference>